<accession>Q9BWC9</accession>
<accession>B3KUF9</accession>
<accession>D3K183</accession>
<accession>Q99786</accession>
<proteinExistence type="evidence at protein level"/>
<dbReference type="EMBL" id="GU354321">
    <property type="protein sequence ID" value="ADC34060.1"/>
    <property type="molecule type" value="mRNA"/>
</dbReference>
<dbReference type="EMBL" id="GU354322">
    <property type="protein sequence ID" value="ADC34061.1"/>
    <property type="molecule type" value="mRNA"/>
</dbReference>
<dbReference type="EMBL" id="GU354323">
    <property type="protein sequence ID" value="ADC34062.1"/>
    <property type="molecule type" value="mRNA"/>
</dbReference>
<dbReference type="EMBL" id="U79303">
    <property type="protein sequence ID" value="AAB50227.1"/>
    <property type="status" value="ALT_SEQ"/>
    <property type="molecule type" value="mRNA"/>
</dbReference>
<dbReference type="EMBL" id="AK097095">
    <property type="protein sequence ID" value="BAG53421.1"/>
    <property type="molecule type" value="mRNA"/>
</dbReference>
<dbReference type="EMBL" id="BC000412">
    <property type="protein sequence ID" value="AAH00412.1"/>
    <property type="molecule type" value="mRNA"/>
</dbReference>
<dbReference type="EMBL" id="BC008956">
    <property type="protein sequence ID" value="AAH08956.1"/>
    <property type="molecule type" value="mRNA"/>
</dbReference>
<dbReference type="EMBL" id="CR450308">
    <property type="protein sequence ID" value="CAG29304.1"/>
    <property type="molecule type" value="mRNA"/>
</dbReference>
<dbReference type="CCDS" id="CCDS33118.1"/>
<dbReference type="RefSeq" id="NP_001357396.1">
    <property type="nucleotide sequence ID" value="NM_001370467.1"/>
</dbReference>
<dbReference type="RefSeq" id="NP_001357397.1">
    <property type="nucleotide sequence ID" value="NM_001370468.1"/>
</dbReference>
<dbReference type="RefSeq" id="NP_001357398.1">
    <property type="nucleotide sequence ID" value="NM_001370469.1"/>
</dbReference>
<dbReference type="RefSeq" id="NP_001357399.1">
    <property type="nucleotide sequence ID" value="NM_001370470.1"/>
</dbReference>
<dbReference type="RefSeq" id="NP_037433.2">
    <property type="nucleotide sequence ID" value="NM_013301.2"/>
</dbReference>
<dbReference type="RefSeq" id="XP_005258884.1">
    <property type="nucleotide sequence ID" value="XM_005258827.2"/>
</dbReference>
<dbReference type="RefSeq" id="XP_005258885.1">
    <property type="nucleotide sequence ID" value="XM_005258828.2"/>
</dbReference>
<dbReference type="SMR" id="Q9BWC9"/>
<dbReference type="BioGRID" id="118952">
    <property type="interactions" value="61"/>
</dbReference>
<dbReference type="FunCoup" id="Q9BWC9">
    <property type="interactions" value="1150"/>
</dbReference>
<dbReference type="IntAct" id="Q9BWC9">
    <property type="interactions" value="54"/>
</dbReference>
<dbReference type="MINT" id="Q9BWC9"/>
<dbReference type="STRING" id="9606.ENSP00000465757"/>
<dbReference type="iPTMnet" id="Q9BWC9"/>
<dbReference type="PhosphoSitePlus" id="Q9BWC9"/>
<dbReference type="BioMuta" id="CCDC106"/>
<dbReference type="DMDM" id="74733424"/>
<dbReference type="jPOST" id="Q9BWC9"/>
<dbReference type="MassIVE" id="Q9BWC9"/>
<dbReference type="PaxDb" id="9606-ENSP00000465757"/>
<dbReference type="PeptideAtlas" id="Q9BWC9"/>
<dbReference type="ProteomicsDB" id="79267"/>
<dbReference type="Pumba" id="Q9BWC9"/>
<dbReference type="Antibodypedia" id="33135">
    <property type="antibodies" value="186 antibodies from 28 providers"/>
</dbReference>
<dbReference type="DNASU" id="29903"/>
<dbReference type="Ensembl" id="ENST00000308964.7">
    <property type="protein sequence ID" value="ENSP00000309681.2"/>
    <property type="gene ID" value="ENSG00000173581.8"/>
</dbReference>
<dbReference type="Ensembl" id="ENST00000586790.6">
    <property type="protein sequence ID" value="ENSP00000465757.1"/>
    <property type="gene ID" value="ENSG00000173581.8"/>
</dbReference>
<dbReference type="Ensembl" id="ENST00000588740.5">
    <property type="protein sequence ID" value="ENSP00000468539.1"/>
    <property type="gene ID" value="ENSG00000173581.8"/>
</dbReference>
<dbReference type="Ensembl" id="ENST00000591578.5">
    <property type="protein sequence ID" value="ENSP00000466870.1"/>
    <property type="gene ID" value="ENSG00000173581.8"/>
</dbReference>
<dbReference type="GeneID" id="29903"/>
<dbReference type="KEGG" id="hsa:29903"/>
<dbReference type="MANE-Select" id="ENST00000586790.6">
    <property type="protein sequence ID" value="ENSP00000465757.1"/>
    <property type="RefSeq nucleotide sequence ID" value="NM_001370470.1"/>
    <property type="RefSeq protein sequence ID" value="NP_001357399.1"/>
</dbReference>
<dbReference type="UCSC" id="uc002qlr.4">
    <property type="organism name" value="human"/>
</dbReference>
<dbReference type="AGR" id="HGNC:30181"/>
<dbReference type="CTD" id="29903"/>
<dbReference type="DisGeNET" id="29903"/>
<dbReference type="GeneCards" id="CCDC106"/>
<dbReference type="HGNC" id="HGNC:30181">
    <property type="gene designation" value="CCDC106"/>
</dbReference>
<dbReference type="HPA" id="ENSG00000173581">
    <property type="expression patterns" value="Tissue enhanced (brain)"/>
</dbReference>
<dbReference type="MIM" id="613478">
    <property type="type" value="gene"/>
</dbReference>
<dbReference type="neXtProt" id="NX_Q9BWC9"/>
<dbReference type="OpenTargets" id="ENSG00000173581"/>
<dbReference type="PharmGKB" id="PA145008652"/>
<dbReference type="VEuPathDB" id="HostDB:ENSG00000173581"/>
<dbReference type="eggNOG" id="ENOG502RTFM">
    <property type="taxonomic scope" value="Eukaryota"/>
</dbReference>
<dbReference type="GeneTree" id="ENSGT00390000013183"/>
<dbReference type="InParanoid" id="Q9BWC9"/>
<dbReference type="OMA" id="CRSKQPP"/>
<dbReference type="OrthoDB" id="8721206at2759"/>
<dbReference type="PAN-GO" id="Q9BWC9">
    <property type="GO annotations" value="1 GO annotation based on evolutionary models"/>
</dbReference>
<dbReference type="PhylomeDB" id="Q9BWC9"/>
<dbReference type="TreeFam" id="TF331729"/>
<dbReference type="PathwayCommons" id="Q9BWC9"/>
<dbReference type="SignaLink" id="Q9BWC9"/>
<dbReference type="BioGRID-ORCS" id="29903">
    <property type="hits" value="54 hits in 1162 CRISPR screens"/>
</dbReference>
<dbReference type="CD-CODE" id="91857CE7">
    <property type="entry name" value="Nucleolus"/>
</dbReference>
<dbReference type="ChiTaRS" id="CCDC106">
    <property type="organism name" value="human"/>
</dbReference>
<dbReference type="GenomeRNAi" id="29903"/>
<dbReference type="Pharos" id="Q9BWC9">
    <property type="development level" value="Tdark"/>
</dbReference>
<dbReference type="PRO" id="PR:Q9BWC9"/>
<dbReference type="Proteomes" id="UP000005640">
    <property type="component" value="Chromosome 19"/>
</dbReference>
<dbReference type="RNAct" id="Q9BWC9">
    <property type="molecule type" value="protein"/>
</dbReference>
<dbReference type="Bgee" id="ENSG00000173581">
    <property type="expression patterns" value="Expressed in nucleus accumbens and 124 other cell types or tissues"/>
</dbReference>
<dbReference type="ExpressionAtlas" id="Q9BWC9">
    <property type="expression patterns" value="baseline and differential"/>
</dbReference>
<dbReference type="GO" id="GO:0005829">
    <property type="term" value="C:cytosol"/>
    <property type="evidence" value="ECO:0000314"/>
    <property type="project" value="HPA"/>
</dbReference>
<dbReference type="GO" id="GO:0005654">
    <property type="term" value="C:nucleoplasm"/>
    <property type="evidence" value="ECO:0000314"/>
    <property type="project" value="HPA"/>
</dbReference>
<dbReference type="InterPro" id="IPR031591">
    <property type="entry name" value="CCDC106"/>
</dbReference>
<dbReference type="PANTHER" id="PTHR16477">
    <property type="entry name" value="COILED-COIL DOMAIN-CONTAINING PROTEIN 106"/>
    <property type="match status" value="1"/>
</dbReference>
<dbReference type="PANTHER" id="PTHR16477:SF2">
    <property type="entry name" value="COILED-COIL DOMAIN-CONTAINING PROTEIN 106"/>
    <property type="match status" value="1"/>
</dbReference>
<dbReference type="Pfam" id="PF15794">
    <property type="entry name" value="CCDC106"/>
    <property type="match status" value="1"/>
</dbReference>
<name>CC106_HUMAN</name>
<keyword id="KW-0175">Coiled coil</keyword>
<keyword id="KW-0539">Nucleus</keyword>
<keyword id="KW-0597">Phosphoprotein</keyword>
<keyword id="KW-1267">Proteomics identification</keyword>
<keyword id="KW-1185">Reference proteome</keyword>
<organism>
    <name type="scientific">Homo sapiens</name>
    <name type="common">Human</name>
    <dbReference type="NCBI Taxonomy" id="9606"/>
    <lineage>
        <taxon>Eukaryota</taxon>
        <taxon>Metazoa</taxon>
        <taxon>Chordata</taxon>
        <taxon>Craniata</taxon>
        <taxon>Vertebrata</taxon>
        <taxon>Euteleostomi</taxon>
        <taxon>Mammalia</taxon>
        <taxon>Eutheria</taxon>
        <taxon>Euarchontoglires</taxon>
        <taxon>Primates</taxon>
        <taxon>Haplorrhini</taxon>
        <taxon>Catarrhini</taxon>
        <taxon>Hominidae</taxon>
        <taxon>Homo</taxon>
    </lineage>
</organism>
<feature type="chain" id="PRO_0000274343" description="Coiled-coil domain-containing protein 106">
    <location>
        <begin position="1"/>
        <end position="280"/>
    </location>
</feature>
<feature type="region of interest" description="Disordered" evidence="2">
    <location>
        <begin position="103"/>
        <end position="176"/>
    </location>
</feature>
<feature type="coiled-coil region" evidence="1">
    <location>
        <begin position="63"/>
        <end position="101"/>
    </location>
</feature>
<feature type="short sequence motif" description="Bipartite nuclear localization signal">
    <location>
        <begin position="151"/>
        <end position="164"/>
    </location>
</feature>
<feature type="compositionally biased region" description="Basic and acidic residues" evidence="2">
    <location>
        <begin position="103"/>
        <end position="121"/>
    </location>
</feature>
<feature type="compositionally biased region" description="Low complexity" evidence="2">
    <location>
        <begin position="133"/>
        <end position="146"/>
    </location>
</feature>
<feature type="compositionally biased region" description="Basic residues" evidence="2">
    <location>
        <begin position="152"/>
        <end position="168"/>
    </location>
</feature>
<feature type="modified residue" description="Phosphoserine" evidence="5">
    <location>
        <position position="130"/>
    </location>
</feature>
<sequence>MNDRSSRRRTMKDDETFEISIPFDEAPHLDPQIFYSLSPSRRNFEEPPEAASSALALMNSVKTQLHMALERNSWLQKRIEDLEEERDFLRCQLDKFISSARMEAEDHCRMKPGPRRMEGDSRGGAGGEASDPESAASSLSGASEEGSASERRRQKQKGGASRRRFGKPKARERQRVKDADGVLCRYKKILGTFQKLKSMSRAFEHHRVDRNTVALTTPIAELLIVAPEKLAEVGEFDPSKERLLEYSRRCFLALDDETLKKVQALKKSKLLLPITYRFKR</sequence>
<protein>
    <recommendedName>
        <fullName>Coiled-coil domain-containing protein 106</fullName>
    </recommendedName>
</protein>
<evidence type="ECO:0000255" key="1"/>
<evidence type="ECO:0000256" key="2">
    <source>
        <dbReference type="SAM" id="MobiDB-lite"/>
    </source>
</evidence>
<evidence type="ECO:0000269" key="3">
    <source>
    </source>
</evidence>
<evidence type="ECO:0000305" key="4"/>
<evidence type="ECO:0007744" key="5">
    <source>
    </source>
</evidence>
<comment type="function">
    <text evidence="3">Promotes the degradation of p53/TP53 protein and inhibits its transactivity.</text>
</comment>
<comment type="subunit">
    <text evidence="3">Interacts with p53/TP53.</text>
</comment>
<comment type="interaction">
    <interactant intactId="EBI-711501">
        <id>Q9BWC9</id>
    </interactant>
    <interactant intactId="EBI-492498">
        <id>P18848</id>
        <label>ATF4</label>
    </interactant>
    <organismsDiffer>false</organismsDiffer>
    <experiments>14</experiments>
</comment>
<comment type="interaction">
    <interactant intactId="EBI-711501">
        <id>Q9BWC9</id>
    </interactant>
    <interactant intactId="EBI-5329490">
        <id>Q13698</id>
        <label>CACNA1S</label>
    </interactant>
    <organismsDiffer>false</organismsDiffer>
    <experiments>3</experiments>
</comment>
<comment type="interaction">
    <interactant intactId="EBI-711501">
        <id>Q9BWC9</id>
    </interactant>
    <interactant intactId="EBI-741885">
        <id>Q96LK0</id>
        <label>CEP19</label>
    </interactant>
    <organismsDiffer>false</organismsDiffer>
    <experiments>3</experiments>
</comment>
<comment type="interaction">
    <interactant intactId="EBI-711501">
        <id>Q9BWC9</id>
    </interactant>
    <interactant intactId="EBI-750700">
        <id>Q8N9N8</id>
        <label>EIF1AD</label>
    </interactant>
    <organismsDiffer>false</organismsDiffer>
    <experiments>3</experiments>
</comment>
<comment type="interaction">
    <interactant intactId="EBI-711501">
        <id>Q9BWC9</id>
    </interactant>
    <interactant intactId="EBI-10175124">
        <id>Q8IZU0</id>
        <label>FAM9B</label>
    </interactant>
    <organismsDiffer>false</organismsDiffer>
    <experiments>8</experiments>
</comment>
<comment type="interaction">
    <interactant intactId="EBI-711501">
        <id>Q9BWC9</id>
    </interactant>
    <interactant intactId="EBI-473695">
        <id>Q8WVZ9</id>
        <label>KBTBD7</label>
    </interactant>
    <organismsDiffer>false</organismsDiffer>
    <experiments>3</experiments>
</comment>
<comment type="interaction">
    <interactant intactId="EBI-711501">
        <id>Q9BWC9</id>
    </interactant>
    <interactant intactId="EBI-739909">
        <id>Q969R5</id>
        <label>L3MBTL2</label>
    </interactant>
    <organismsDiffer>false</organismsDiffer>
    <experiments>3</experiments>
</comment>
<comment type="interaction">
    <interactant intactId="EBI-711501">
        <id>Q9BWC9</id>
    </interactant>
    <interactant intactId="EBI-739552">
        <id>P43364</id>
        <label>MAGEA11</label>
    </interactant>
    <organismsDiffer>false</organismsDiffer>
    <experiments>3</experiments>
</comment>
<comment type="interaction">
    <interactant intactId="EBI-711501">
        <id>Q9BWC9</id>
    </interactant>
    <interactant intactId="EBI-746778">
        <id>Q96A72</id>
        <label>MAGOHB</label>
    </interactant>
    <organismsDiffer>false</organismsDiffer>
    <experiments>3</experiments>
</comment>
<comment type="interaction">
    <interactant intactId="EBI-711501">
        <id>Q9BWC9</id>
    </interactant>
    <interactant intactId="EBI-747693">
        <id>P41227</id>
        <label>NAA10</label>
    </interactant>
    <organismsDiffer>false</organismsDiffer>
    <experiments>3</experiments>
</comment>
<comment type="interaction">
    <interactant intactId="EBI-711501">
        <id>Q9BWC9</id>
    </interactant>
    <interactant intactId="EBI-3920396">
        <id>Q6ZUT1</id>
        <label>NKAPD1</label>
    </interactant>
    <organismsDiffer>false</organismsDiffer>
    <experiments>5</experiments>
</comment>
<comment type="interaction">
    <interactant intactId="EBI-711501">
        <id>Q9BWC9</id>
    </interactant>
    <interactant intactId="EBI-591778">
        <id>P61970</id>
        <label>NUTF2</label>
    </interactant>
    <organismsDiffer>false</organismsDiffer>
    <experiments>3</experiments>
</comment>
<comment type="interaction">
    <interactant intactId="EBI-711501">
        <id>Q9BWC9</id>
    </interactant>
    <interactant intactId="EBI-1567797">
        <id>Q8WWY3</id>
        <label>PRPF31</label>
    </interactant>
    <organismsDiffer>false</organismsDiffer>
    <experiments>3</experiments>
</comment>
<comment type="interaction">
    <interactant intactId="EBI-711501">
        <id>Q9BWC9</id>
    </interactant>
    <interactant intactId="EBI-1504830">
        <id>Q9P2K3-2</id>
        <label>RCOR3</label>
    </interactant>
    <organismsDiffer>false</organismsDiffer>
    <experiments>3</experiments>
</comment>
<comment type="interaction">
    <interactant intactId="EBI-711501">
        <id>Q9BWC9</id>
    </interactant>
    <interactant intactId="EBI-727004">
        <id>O00560</id>
        <label>SDCBP</label>
    </interactant>
    <organismsDiffer>false</organismsDiffer>
    <experiments>3</experiments>
</comment>
<comment type="interaction">
    <interactant intactId="EBI-711501">
        <id>Q9BWC9</id>
    </interactant>
    <interactant intactId="EBI-366083">
        <id>P04637</id>
        <label>TP53</label>
    </interactant>
    <organismsDiffer>false</organismsDiffer>
    <experiments>3</experiments>
</comment>
<comment type="subcellular location">
    <subcellularLocation>
        <location evidence="3">Nucleus</location>
    </subcellularLocation>
    <text>Colocalizes with p53/TP53.</text>
</comment>
<comment type="sequence caution" evidence="4">
    <conflict type="erroneous termination">
        <sequence resource="EMBL-CDS" id="AAB50227"/>
    </conflict>
    <text>Truncated C-terminus.</text>
</comment>
<reference key="1">
    <citation type="journal article" date="2010" name="FEBS Lett.">
        <title>Identification and characterization of the novel protein CCDC106 that interacts with p53 and promotes its degradation.</title>
        <authorList>
            <person name="Zhou J."/>
            <person name="Qiao X."/>
            <person name="Xiao L."/>
            <person name="Sun W."/>
            <person name="Wang L."/>
            <person name="Li H."/>
            <person name="Wu Y."/>
            <person name="Ding X."/>
            <person name="Hu X."/>
            <person name="Zhou C."/>
            <person name="Zhang J."/>
        </authorList>
    </citation>
    <scope>NUCLEOTIDE SEQUENCE [MRNA]</scope>
    <scope>FUNCTION</scope>
    <scope>SUBCELLULAR LOCATION</scope>
    <scope>INTERACTION WITH TP53</scope>
</reference>
<reference key="2">
    <citation type="journal article" date="1997" name="Genome Res.">
        <title>Large-scale concatenation cDNA sequencing.</title>
        <authorList>
            <person name="Yu W."/>
            <person name="Andersson B."/>
            <person name="Worley K.C."/>
            <person name="Muzny D.M."/>
            <person name="Ding Y."/>
            <person name="Liu W."/>
            <person name="Ricafrente J.Y."/>
            <person name="Wentland M.A."/>
            <person name="Lennon G."/>
            <person name="Gibbs R.A."/>
        </authorList>
    </citation>
    <scope>NUCLEOTIDE SEQUENCE [LARGE SCALE MRNA]</scope>
    <source>
        <tissue>Brain</tissue>
    </source>
</reference>
<reference key="3">
    <citation type="journal article" date="2004" name="Nat. Genet.">
        <title>Complete sequencing and characterization of 21,243 full-length human cDNAs.</title>
        <authorList>
            <person name="Ota T."/>
            <person name="Suzuki Y."/>
            <person name="Nishikawa T."/>
            <person name="Otsuki T."/>
            <person name="Sugiyama T."/>
            <person name="Irie R."/>
            <person name="Wakamatsu A."/>
            <person name="Hayashi K."/>
            <person name="Sato H."/>
            <person name="Nagai K."/>
            <person name="Kimura K."/>
            <person name="Makita H."/>
            <person name="Sekine M."/>
            <person name="Obayashi M."/>
            <person name="Nishi T."/>
            <person name="Shibahara T."/>
            <person name="Tanaka T."/>
            <person name="Ishii S."/>
            <person name="Yamamoto J."/>
            <person name="Saito K."/>
            <person name="Kawai Y."/>
            <person name="Isono Y."/>
            <person name="Nakamura Y."/>
            <person name="Nagahari K."/>
            <person name="Murakami K."/>
            <person name="Yasuda T."/>
            <person name="Iwayanagi T."/>
            <person name="Wagatsuma M."/>
            <person name="Shiratori A."/>
            <person name="Sudo H."/>
            <person name="Hosoiri T."/>
            <person name="Kaku Y."/>
            <person name="Kodaira H."/>
            <person name="Kondo H."/>
            <person name="Sugawara M."/>
            <person name="Takahashi M."/>
            <person name="Kanda K."/>
            <person name="Yokoi T."/>
            <person name="Furuya T."/>
            <person name="Kikkawa E."/>
            <person name="Omura Y."/>
            <person name="Abe K."/>
            <person name="Kamihara K."/>
            <person name="Katsuta N."/>
            <person name="Sato K."/>
            <person name="Tanikawa M."/>
            <person name="Yamazaki M."/>
            <person name="Ninomiya K."/>
            <person name="Ishibashi T."/>
            <person name="Yamashita H."/>
            <person name="Murakawa K."/>
            <person name="Fujimori K."/>
            <person name="Tanai H."/>
            <person name="Kimata M."/>
            <person name="Watanabe M."/>
            <person name="Hiraoka S."/>
            <person name="Chiba Y."/>
            <person name="Ishida S."/>
            <person name="Ono Y."/>
            <person name="Takiguchi S."/>
            <person name="Watanabe S."/>
            <person name="Yosida M."/>
            <person name="Hotuta T."/>
            <person name="Kusano J."/>
            <person name="Kanehori K."/>
            <person name="Takahashi-Fujii A."/>
            <person name="Hara H."/>
            <person name="Tanase T.-O."/>
            <person name="Nomura Y."/>
            <person name="Togiya S."/>
            <person name="Komai F."/>
            <person name="Hara R."/>
            <person name="Takeuchi K."/>
            <person name="Arita M."/>
            <person name="Imose N."/>
            <person name="Musashino K."/>
            <person name="Yuuki H."/>
            <person name="Oshima A."/>
            <person name="Sasaki N."/>
            <person name="Aotsuka S."/>
            <person name="Yoshikawa Y."/>
            <person name="Matsunawa H."/>
            <person name="Ichihara T."/>
            <person name="Shiohata N."/>
            <person name="Sano S."/>
            <person name="Moriya S."/>
            <person name="Momiyama H."/>
            <person name="Satoh N."/>
            <person name="Takami S."/>
            <person name="Terashima Y."/>
            <person name="Suzuki O."/>
            <person name="Nakagawa S."/>
            <person name="Senoh A."/>
            <person name="Mizoguchi H."/>
            <person name="Goto Y."/>
            <person name="Shimizu F."/>
            <person name="Wakebe H."/>
            <person name="Hishigaki H."/>
            <person name="Watanabe T."/>
            <person name="Sugiyama A."/>
            <person name="Takemoto M."/>
            <person name="Kawakami B."/>
            <person name="Yamazaki M."/>
            <person name="Watanabe K."/>
            <person name="Kumagai A."/>
            <person name="Itakura S."/>
            <person name="Fukuzumi Y."/>
            <person name="Fujimori Y."/>
            <person name="Komiyama M."/>
            <person name="Tashiro H."/>
            <person name="Tanigami A."/>
            <person name="Fujiwara T."/>
            <person name="Ono T."/>
            <person name="Yamada K."/>
            <person name="Fujii Y."/>
            <person name="Ozaki K."/>
            <person name="Hirao M."/>
            <person name="Ohmori Y."/>
            <person name="Kawabata A."/>
            <person name="Hikiji T."/>
            <person name="Kobatake N."/>
            <person name="Inagaki H."/>
            <person name="Ikema Y."/>
            <person name="Okamoto S."/>
            <person name="Okitani R."/>
            <person name="Kawakami T."/>
            <person name="Noguchi S."/>
            <person name="Itoh T."/>
            <person name="Shigeta K."/>
            <person name="Senba T."/>
            <person name="Matsumura K."/>
            <person name="Nakajima Y."/>
            <person name="Mizuno T."/>
            <person name="Morinaga M."/>
            <person name="Sasaki M."/>
            <person name="Togashi T."/>
            <person name="Oyama M."/>
            <person name="Hata H."/>
            <person name="Watanabe M."/>
            <person name="Komatsu T."/>
            <person name="Mizushima-Sugano J."/>
            <person name="Satoh T."/>
            <person name="Shirai Y."/>
            <person name="Takahashi Y."/>
            <person name="Nakagawa K."/>
            <person name="Okumura K."/>
            <person name="Nagase T."/>
            <person name="Nomura N."/>
            <person name="Kikuchi H."/>
            <person name="Masuho Y."/>
            <person name="Yamashita R."/>
            <person name="Nakai K."/>
            <person name="Yada T."/>
            <person name="Nakamura Y."/>
            <person name="Ohara O."/>
            <person name="Isogai T."/>
            <person name="Sugano S."/>
        </authorList>
    </citation>
    <scope>NUCLEOTIDE SEQUENCE [LARGE SCALE MRNA]</scope>
    <source>
        <tissue>Spleen</tissue>
    </source>
</reference>
<reference key="4">
    <citation type="journal article" date="2004" name="Genome Res.">
        <title>The status, quality, and expansion of the NIH full-length cDNA project: the Mammalian Gene Collection (MGC).</title>
        <authorList>
            <consortium name="The MGC Project Team"/>
        </authorList>
    </citation>
    <scope>NUCLEOTIDE SEQUENCE [LARGE SCALE MRNA]</scope>
    <source>
        <tissue>Muscle</tissue>
    </source>
</reference>
<reference key="5">
    <citation type="submission" date="2004-05" db="EMBL/GenBank/DDBJ databases">
        <title>Cloning of human full open reading frames in Gateway(TM) system entry vector (pDONR201).</title>
        <authorList>
            <person name="Ebert L."/>
            <person name="Schick M."/>
            <person name="Neubert P."/>
            <person name="Schatten R."/>
            <person name="Henze S."/>
            <person name="Korn B."/>
        </authorList>
    </citation>
    <scope>NUCLEOTIDE SEQUENCE [LARGE SCALE MRNA] OF 1-153</scope>
</reference>
<reference key="6">
    <citation type="journal article" date="2013" name="J. Proteome Res.">
        <title>Toward a comprehensive characterization of a human cancer cell phosphoproteome.</title>
        <authorList>
            <person name="Zhou H."/>
            <person name="Di Palma S."/>
            <person name="Preisinger C."/>
            <person name="Peng M."/>
            <person name="Polat A.N."/>
            <person name="Heck A.J."/>
            <person name="Mohammed S."/>
        </authorList>
    </citation>
    <scope>PHOSPHORYLATION [LARGE SCALE ANALYSIS] AT SER-130</scope>
    <scope>IDENTIFICATION BY MASS SPECTROMETRY [LARGE SCALE ANALYSIS]</scope>
    <source>
        <tissue>Erythroleukemia</tissue>
    </source>
</reference>
<gene>
    <name type="primary">CCDC106</name>
</gene>